<dbReference type="EMBL" id="CP000230">
    <property type="protein sequence ID" value="ABC23480.1"/>
    <property type="molecule type" value="Genomic_DNA"/>
</dbReference>
<dbReference type="RefSeq" id="WP_011390433.1">
    <property type="nucleotide sequence ID" value="NC_007643.1"/>
</dbReference>
<dbReference type="RefSeq" id="YP_427767.1">
    <property type="nucleotide sequence ID" value="NC_007643.1"/>
</dbReference>
<dbReference type="SMR" id="Q2RQW5"/>
<dbReference type="STRING" id="269796.Rru_A2683"/>
<dbReference type="EnsemblBacteria" id="ABC23480">
    <property type="protein sequence ID" value="ABC23480"/>
    <property type="gene ID" value="Rru_A2683"/>
</dbReference>
<dbReference type="KEGG" id="rru:Rru_A2683"/>
<dbReference type="PATRIC" id="fig|269796.9.peg.2790"/>
<dbReference type="eggNOG" id="COG0091">
    <property type="taxonomic scope" value="Bacteria"/>
</dbReference>
<dbReference type="HOGENOM" id="CLU_083987_3_0_5"/>
<dbReference type="PhylomeDB" id="Q2RQW5"/>
<dbReference type="Proteomes" id="UP000001929">
    <property type="component" value="Chromosome"/>
</dbReference>
<dbReference type="GO" id="GO:0022625">
    <property type="term" value="C:cytosolic large ribosomal subunit"/>
    <property type="evidence" value="ECO:0007669"/>
    <property type="project" value="TreeGrafter"/>
</dbReference>
<dbReference type="GO" id="GO:0019843">
    <property type="term" value="F:rRNA binding"/>
    <property type="evidence" value="ECO:0007669"/>
    <property type="project" value="UniProtKB-UniRule"/>
</dbReference>
<dbReference type="GO" id="GO:0003735">
    <property type="term" value="F:structural constituent of ribosome"/>
    <property type="evidence" value="ECO:0007669"/>
    <property type="project" value="InterPro"/>
</dbReference>
<dbReference type="GO" id="GO:0006412">
    <property type="term" value="P:translation"/>
    <property type="evidence" value="ECO:0007669"/>
    <property type="project" value="UniProtKB-UniRule"/>
</dbReference>
<dbReference type="CDD" id="cd00336">
    <property type="entry name" value="Ribosomal_L22"/>
    <property type="match status" value="1"/>
</dbReference>
<dbReference type="Gene3D" id="3.90.470.10">
    <property type="entry name" value="Ribosomal protein L22/L17"/>
    <property type="match status" value="1"/>
</dbReference>
<dbReference type="HAMAP" id="MF_01331_B">
    <property type="entry name" value="Ribosomal_uL22_B"/>
    <property type="match status" value="1"/>
</dbReference>
<dbReference type="InterPro" id="IPR001063">
    <property type="entry name" value="Ribosomal_uL22"/>
</dbReference>
<dbReference type="InterPro" id="IPR005727">
    <property type="entry name" value="Ribosomal_uL22_bac/chlpt-type"/>
</dbReference>
<dbReference type="InterPro" id="IPR047867">
    <property type="entry name" value="Ribosomal_uL22_bac/org-type"/>
</dbReference>
<dbReference type="InterPro" id="IPR018260">
    <property type="entry name" value="Ribosomal_uL22_CS"/>
</dbReference>
<dbReference type="InterPro" id="IPR036394">
    <property type="entry name" value="Ribosomal_uL22_sf"/>
</dbReference>
<dbReference type="NCBIfam" id="TIGR01044">
    <property type="entry name" value="rplV_bact"/>
    <property type="match status" value="1"/>
</dbReference>
<dbReference type="PANTHER" id="PTHR13501">
    <property type="entry name" value="CHLOROPLAST 50S RIBOSOMAL PROTEIN L22-RELATED"/>
    <property type="match status" value="1"/>
</dbReference>
<dbReference type="PANTHER" id="PTHR13501:SF8">
    <property type="entry name" value="LARGE RIBOSOMAL SUBUNIT PROTEIN UL22M"/>
    <property type="match status" value="1"/>
</dbReference>
<dbReference type="Pfam" id="PF00237">
    <property type="entry name" value="Ribosomal_L22"/>
    <property type="match status" value="1"/>
</dbReference>
<dbReference type="SUPFAM" id="SSF54843">
    <property type="entry name" value="Ribosomal protein L22"/>
    <property type="match status" value="1"/>
</dbReference>
<dbReference type="PROSITE" id="PS00464">
    <property type="entry name" value="RIBOSOMAL_L22"/>
    <property type="match status" value="1"/>
</dbReference>
<reference key="1">
    <citation type="journal article" date="2011" name="Stand. Genomic Sci.">
        <title>Complete genome sequence of Rhodospirillum rubrum type strain (S1).</title>
        <authorList>
            <person name="Munk A.C."/>
            <person name="Copeland A."/>
            <person name="Lucas S."/>
            <person name="Lapidus A."/>
            <person name="Del Rio T.G."/>
            <person name="Barry K."/>
            <person name="Detter J.C."/>
            <person name="Hammon N."/>
            <person name="Israni S."/>
            <person name="Pitluck S."/>
            <person name="Brettin T."/>
            <person name="Bruce D."/>
            <person name="Han C."/>
            <person name="Tapia R."/>
            <person name="Gilna P."/>
            <person name="Schmutz J."/>
            <person name="Larimer F."/>
            <person name="Land M."/>
            <person name="Kyrpides N.C."/>
            <person name="Mavromatis K."/>
            <person name="Richardson P."/>
            <person name="Rohde M."/>
            <person name="Goeker M."/>
            <person name="Klenk H.P."/>
            <person name="Zhang Y."/>
            <person name="Roberts G.P."/>
            <person name="Reslewic S."/>
            <person name="Schwartz D.C."/>
        </authorList>
    </citation>
    <scope>NUCLEOTIDE SEQUENCE [LARGE SCALE GENOMIC DNA]</scope>
    <source>
        <strain>ATCC 11170 / ATH 1.1.1 / DSM 467 / LMG 4362 / NCIMB 8255 / S1</strain>
    </source>
</reference>
<evidence type="ECO:0000255" key="1">
    <source>
        <dbReference type="HAMAP-Rule" id="MF_01331"/>
    </source>
</evidence>
<evidence type="ECO:0000305" key="2"/>
<name>RL22_RHORT</name>
<protein>
    <recommendedName>
        <fullName evidence="1">Large ribosomal subunit protein uL22</fullName>
    </recommendedName>
    <alternativeName>
        <fullName evidence="2">50S ribosomal protein L22</fullName>
    </alternativeName>
</protein>
<feature type="chain" id="PRO_0000243197" description="Large ribosomal subunit protein uL22">
    <location>
        <begin position="1"/>
        <end position="126"/>
    </location>
</feature>
<keyword id="KW-1185">Reference proteome</keyword>
<keyword id="KW-0687">Ribonucleoprotein</keyword>
<keyword id="KW-0689">Ribosomal protein</keyword>
<keyword id="KW-0694">RNA-binding</keyword>
<keyword id="KW-0699">rRNA-binding</keyword>
<organism>
    <name type="scientific">Rhodospirillum rubrum (strain ATCC 11170 / ATH 1.1.1 / DSM 467 / LMG 4362 / NCIMB 8255 / S1)</name>
    <dbReference type="NCBI Taxonomy" id="269796"/>
    <lineage>
        <taxon>Bacteria</taxon>
        <taxon>Pseudomonadati</taxon>
        <taxon>Pseudomonadota</taxon>
        <taxon>Alphaproteobacteria</taxon>
        <taxon>Rhodospirillales</taxon>
        <taxon>Rhodospirillaceae</taxon>
        <taxon>Rhodospirillum</taxon>
    </lineage>
</organism>
<gene>
    <name evidence="1" type="primary">rplV</name>
    <name type="ordered locus">Rru_A2683</name>
</gene>
<accession>Q2RQW5</accession>
<sequence length="126" mass="14152">MGKQATERRLADTEARAITKMIRTSPYKLNLVAESIRGKTAERALAELTFSKRRMADTVKKTLQSAIANAENNHQLDVDQLIVSEAYVGKAMVLKRWRARARGRVGKILKPFSNLTIVVRERGETA</sequence>
<proteinExistence type="inferred from homology"/>
<comment type="function">
    <text evidence="1">This protein binds specifically to 23S rRNA; its binding is stimulated by other ribosomal proteins, e.g. L4, L17, and L20. It is important during the early stages of 50S assembly. It makes multiple contacts with different domains of the 23S rRNA in the assembled 50S subunit and ribosome (By similarity).</text>
</comment>
<comment type="function">
    <text evidence="1">The globular domain of the protein is located near the polypeptide exit tunnel on the outside of the subunit, while an extended beta-hairpin is found that lines the wall of the exit tunnel in the center of the 70S ribosome.</text>
</comment>
<comment type="subunit">
    <text evidence="1">Part of the 50S ribosomal subunit.</text>
</comment>
<comment type="similarity">
    <text evidence="1">Belongs to the universal ribosomal protein uL22 family.</text>
</comment>